<accession>B2TIZ9</accession>
<sequence length="485" mass="52666">MDFTNYKAHELKNLISKKEASVEEVTKAHLENVKNIDEKVNAFLYIAEEEALNDAKALDEKLSKGEDIGLLGGAPLGIKDNISVKNMQNTCASKILEGYISPYDATVSESVKSQGGVILGKLNMDEFAMGSSTENSAYKITRNPWDLDRVPGGSSGGSAAAVASKEVPLALGTDTGGSVRQPASFCGIVGLKPTYGRVSRSGVVAYGSTLDQVGTLGRDVKDCALLTQVISGVDHRDFTTANINVPNYENSLSENIKGKKIALPKEFFKDGLDPKVQKAIYDALEVFKANGAEITEVSLPLADYAISAYYLLACAEASSNLARFDGVRYGHRSESVEDAVDVYFKSRSEAFGKEVKKRIMLGTYALSAGYYDAYYKKALKVRNLIKGEFENIFKDFDAIISPTAPTPAYKIGEKTENALEMYLGDIYTVPVNIAGIPAISLPCGVADGLPVGLQIMGNYFKEDTLFNLAYSYEQSTKWHEMHPNL</sequence>
<gene>
    <name evidence="1" type="primary">gatA</name>
    <name type="ordered locus">CLL_A0411</name>
</gene>
<dbReference type="EC" id="6.3.5.7" evidence="1"/>
<dbReference type="EMBL" id="CP001056">
    <property type="protein sequence ID" value="ACD24243.1"/>
    <property type="molecule type" value="Genomic_DNA"/>
</dbReference>
<dbReference type="SMR" id="B2TIZ9"/>
<dbReference type="KEGG" id="cbk:CLL_A0411"/>
<dbReference type="PATRIC" id="fig|935198.13.peg.388"/>
<dbReference type="HOGENOM" id="CLU_009600_0_3_9"/>
<dbReference type="Proteomes" id="UP000001195">
    <property type="component" value="Chromosome"/>
</dbReference>
<dbReference type="GO" id="GO:0030956">
    <property type="term" value="C:glutamyl-tRNA(Gln) amidotransferase complex"/>
    <property type="evidence" value="ECO:0007669"/>
    <property type="project" value="InterPro"/>
</dbReference>
<dbReference type="GO" id="GO:0005524">
    <property type="term" value="F:ATP binding"/>
    <property type="evidence" value="ECO:0007669"/>
    <property type="project" value="UniProtKB-KW"/>
</dbReference>
<dbReference type="GO" id="GO:0050567">
    <property type="term" value="F:glutaminyl-tRNA synthase (glutamine-hydrolyzing) activity"/>
    <property type="evidence" value="ECO:0007669"/>
    <property type="project" value="UniProtKB-UniRule"/>
</dbReference>
<dbReference type="GO" id="GO:0006412">
    <property type="term" value="P:translation"/>
    <property type="evidence" value="ECO:0007669"/>
    <property type="project" value="UniProtKB-UniRule"/>
</dbReference>
<dbReference type="Gene3D" id="3.90.1300.10">
    <property type="entry name" value="Amidase signature (AS) domain"/>
    <property type="match status" value="1"/>
</dbReference>
<dbReference type="HAMAP" id="MF_00120">
    <property type="entry name" value="GatA"/>
    <property type="match status" value="1"/>
</dbReference>
<dbReference type="InterPro" id="IPR000120">
    <property type="entry name" value="Amidase"/>
</dbReference>
<dbReference type="InterPro" id="IPR020556">
    <property type="entry name" value="Amidase_CS"/>
</dbReference>
<dbReference type="InterPro" id="IPR023631">
    <property type="entry name" value="Amidase_dom"/>
</dbReference>
<dbReference type="InterPro" id="IPR036928">
    <property type="entry name" value="AS_sf"/>
</dbReference>
<dbReference type="InterPro" id="IPR004412">
    <property type="entry name" value="GatA"/>
</dbReference>
<dbReference type="NCBIfam" id="TIGR00132">
    <property type="entry name" value="gatA"/>
    <property type="match status" value="1"/>
</dbReference>
<dbReference type="PANTHER" id="PTHR11895:SF151">
    <property type="entry name" value="GLUTAMYL-TRNA(GLN) AMIDOTRANSFERASE SUBUNIT A"/>
    <property type="match status" value="1"/>
</dbReference>
<dbReference type="PANTHER" id="PTHR11895">
    <property type="entry name" value="TRANSAMIDASE"/>
    <property type="match status" value="1"/>
</dbReference>
<dbReference type="Pfam" id="PF01425">
    <property type="entry name" value="Amidase"/>
    <property type="match status" value="1"/>
</dbReference>
<dbReference type="SUPFAM" id="SSF75304">
    <property type="entry name" value="Amidase signature (AS) enzymes"/>
    <property type="match status" value="1"/>
</dbReference>
<dbReference type="PROSITE" id="PS00571">
    <property type="entry name" value="AMIDASES"/>
    <property type="match status" value="1"/>
</dbReference>
<keyword id="KW-0067">ATP-binding</keyword>
<keyword id="KW-0436">Ligase</keyword>
<keyword id="KW-0547">Nucleotide-binding</keyword>
<keyword id="KW-0648">Protein biosynthesis</keyword>
<proteinExistence type="inferred from homology"/>
<reference key="1">
    <citation type="submission" date="2008-04" db="EMBL/GenBank/DDBJ databases">
        <title>Complete sequence of Clostridium botulinum strain Eklund.</title>
        <authorList>
            <person name="Brinkac L.M."/>
            <person name="Brown J.L."/>
            <person name="Bruce D."/>
            <person name="Detter C."/>
            <person name="Munk C."/>
            <person name="Smith L.A."/>
            <person name="Smith T.J."/>
            <person name="Sutton G."/>
            <person name="Brettin T.S."/>
        </authorList>
    </citation>
    <scope>NUCLEOTIDE SEQUENCE [LARGE SCALE GENOMIC DNA]</scope>
    <source>
        <strain>Eklund 17B / Type B</strain>
    </source>
</reference>
<evidence type="ECO:0000255" key="1">
    <source>
        <dbReference type="HAMAP-Rule" id="MF_00120"/>
    </source>
</evidence>
<name>GATA_CLOBB</name>
<protein>
    <recommendedName>
        <fullName evidence="1">Glutamyl-tRNA(Gln) amidotransferase subunit A</fullName>
        <shortName evidence="1">Glu-ADT subunit A</shortName>
        <ecNumber evidence="1">6.3.5.7</ecNumber>
    </recommendedName>
</protein>
<comment type="function">
    <text evidence="1">Allows the formation of correctly charged Gln-tRNA(Gln) through the transamidation of misacylated Glu-tRNA(Gln) in organisms which lack glutaminyl-tRNA synthetase. The reaction takes place in the presence of glutamine and ATP through an activated gamma-phospho-Glu-tRNA(Gln).</text>
</comment>
<comment type="catalytic activity">
    <reaction evidence="1">
        <text>L-glutamyl-tRNA(Gln) + L-glutamine + ATP + H2O = L-glutaminyl-tRNA(Gln) + L-glutamate + ADP + phosphate + H(+)</text>
        <dbReference type="Rhea" id="RHEA:17521"/>
        <dbReference type="Rhea" id="RHEA-COMP:9681"/>
        <dbReference type="Rhea" id="RHEA-COMP:9684"/>
        <dbReference type="ChEBI" id="CHEBI:15377"/>
        <dbReference type="ChEBI" id="CHEBI:15378"/>
        <dbReference type="ChEBI" id="CHEBI:29985"/>
        <dbReference type="ChEBI" id="CHEBI:30616"/>
        <dbReference type="ChEBI" id="CHEBI:43474"/>
        <dbReference type="ChEBI" id="CHEBI:58359"/>
        <dbReference type="ChEBI" id="CHEBI:78520"/>
        <dbReference type="ChEBI" id="CHEBI:78521"/>
        <dbReference type="ChEBI" id="CHEBI:456216"/>
        <dbReference type="EC" id="6.3.5.7"/>
    </reaction>
</comment>
<comment type="subunit">
    <text evidence="1">Heterotrimer of A, B and C subunits.</text>
</comment>
<comment type="similarity">
    <text evidence="1">Belongs to the amidase family. GatA subfamily.</text>
</comment>
<feature type="chain" id="PRO_1000095124" description="Glutamyl-tRNA(Gln) amidotransferase subunit A">
    <location>
        <begin position="1"/>
        <end position="485"/>
    </location>
</feature>
<feature type="active site" description="Charge relay system" evidence="1">
    <location>
        <position position="79"/>
    </location>
</feature>
<feature type="active site" description="Charge relay system" evidence="1">
    <location>
        <position position="154"/>
    </location>
</feature>
<feature type="active site" description="Acyl-ester intermediate" evidence="1">
    <location>
        <position position="178"/>
    </location>
</feature>
<organism>
    <name type="scientific">Clostridium botulinum (strain Eklund 17B / Type B)</name>
    <dbReference type="NCBI Taxonomy" id="935198"/>
    <lineage>
        <taxon>Bacteria</taxon>
        <taxon>Bacillati</taxon>
        <taxon>Bacillota</taxon>
        <taxon>Clostridia</taxon>
        <taxon>Eubacteriales</taxon>
        <taxon>Clostridiaceae</taxon>
        <taxon>Clostridium</taxon>
    </lineage>
</organism>